<keyword id="KW-0030">Aminoacyl-tRNA synthetase</keyword>
<keyword id="KW-0067">ATP-binding</keyword>
<keyword id="KW-0963">Cytoplasm</keyword>
<keyword id="KW-0436">Ligase</keyword>
<keyword id="KW-0547">Nucleotide-binding</keyword>
<keyword id="KW-0648">Protein biosynthesis</keyword>
<gene>
    <name evidence="1" type="primary">gltX</name>
    <name type="ordered locus">VFMJ11_2020</name>
</gene>
<evidence type="ECO:0000255" key="1">
    <source>
        <dbReference type="HAMAP-Rule" id="MF_00022"/>
    </source>
</evidence>
<reference key="1">
    <citation type="submission" date="2008-08" db="EMBL/GenBank/DDBJ databases">
        <title>Complete sequence of Vibrio fischeri strain MJ11.</title>
        <authorList>
            <person name="Mandel M.J."/>
            <person name="Stabb E.V."/>
            <person name="Ruby E.G."/>
            <person name="Ferriera S."/>
            <person name="Johnson J."/>
            <person name="Kravitz S."/>
            <person name="Beeson K."/>
            <person name="Sutton G."/>
            <person name="Rogers Y.-H."/>
            <person name="Friedman R."/>
            <person name="Frazier M."/>
            <person name="Venter J.C."/>
        </authorList>
    </citation>
    <scope>NUCLEOTIDE SEQUENCE [LARGE SCALE GENOMIC DNA]</scope>
    <source>
        <strain>MJ11</strain>
    </source>
</reference>
<dbReference type="EC" id="6.1.1.17" evidence="1"/>
<dbReference type="EMBL" id="CP001139">
    <property type="protein sequence ID" value="ACH66047.1"/>
    <property type="molecule type" value="Genomic_DNA"/>
</dbReference>
<dbReference type="RefSeq" id="WP_005420418.1">
    <property type="nucleotide sequence ID" value="NC_011184.1"/>
</dbReference>
<dbReference type="SMR" id="B5FGU2"/>
<dbReference type="KEGG" id="vfm:VFMJ11_2020"/>
<dbReference type="HOGENOM" id="CLU_015768_6_0_6"/>
<dbReference type="Proteomes" id="UP000001857">
    <property type="component" value="Chromosome I"/>
</dbReference>
<dbReference type="GO" id="GO:0005829">
    <property type="term" value="C:cytosol"/>
    <property type="evidence" value="ECO:0007669"/>
    <property type="project" value="TreeGrafter"/>
</dbReference>
<dbReference type="GO" id="GO:0005524">
    <property type="term" value="F:ATP binding"/>
    <property type="evidence" value="ECO:0007669"/>
    <property type="project" value="UniProtKB-UniRule"/>
</dbReference>
<dbReference type="GO" id="GO:0004818">
    <property type="term" value="F:glutamate-tRNA ligase activity"/>
    <property type="evidence" value="ECO:0007669"/>
    <property type="project" value="UniProtKB-UniRule"/>
</dbReference>
<dbReference type="GO" id="GO:0000049">
    <property type="term" value="F:tRNA binding"/>
    <property type="evidence" value="ECO:0007669"/>
    <property type="project" value="InterPro"/>
</dbReference>
<dbReference type="GO" id="GO:0008270">
    <property type="term" value="F:zinc ion binding"/>
    <property type="evidence" value="ECO:0007669"/>
    <property type="project" value="InterPro"/>
</dbReference>
<dbReference type="GO" id="GO:0006424">
    <property type="term" value="P:glutamyl-tRNA aminoacylation"/>
    <property type="evidence" value="ECO:0007669"/>
    <property type="project" value="UniProtKB-UniRule"/>
</dbReference>
<dbReference type="CDD" id="cd00808">
    <property type="entry name" value="GluRS_core"/>
    <property type="match status" value="1"/>
</dbReference>
<dbReference type="FunFam" id="3.40.50.620:FF:000007">
    <property type="entry name" value="Glutamate--tRNA ligase"/>
    <property type="match status" value="1"/>
</dbReference>
<dbReference type="Gene3D" id="1.10.10.350">
    <property type="match status" value="1"/>
</dbReference>
<dbReference type="Gene3D" id="3.40.50.620">
    <property type="entry name" value="HUPs"/>
    <property type="match status" value="1"/>
</dbReference>
<dbReference type="HAMAP" id="MF_00022">
    <property type="entry name" value="Glu_tRNA_synth_type1"/>
    <property type="match status" value="1"/>
</dbReference>
<dbReference type="InterPro" id="IPR045462">
    <property type="entry name" value="aa-tRNA-synth_I_cd-bd"/>
</dbReference>
<dbReference type="InterPro" id="IPR020751">
    <property type="entry name" value="aa-tRNA-synth_I_codon-bd_sub2"/>
</dbReference>
<dbReference type="InterPro" id="IPR001412">
    <property type="entry name" value="aa-tRNA-synth_I_CS"/>
</dbReference>
<dbReference type="InterPro" id="IPR008925">
    <property type="entry name" value="aa_tRNA-synth_I_cd-bd_sf"/>
</dbReference>
<dbReference type="InterPro" id="IPR004527">
    <property type="entry name" value="Glu-tRNA-ligase_bac/mito"/>
</dbReference>
<dbReference type="InterPro" id="IPR000924">
    <property type="entry name" value="Glu/Gln-tRNA-synth"/>
</dbReference>
<dbReference type="InterPro" id="IPR020058">
    <property type="entry name" value="Glu/Gln-tRNA-synth_Ib_cat-dom"/>
</dbReference>
<dbReference type="InterPro" id="IPR049940">
    <property type="entry name" value="GluQ/Sye"/>
</dbReference>
<dbReference type="InterPro" id="IPR033910">
    <property type="entry name" value="GluRS_core"/>
</dbReference>
<dbReference type="InterPro" id="IPR014729">
    <property type="entry name" value="Rossmann-like_a/b/a_fold"/>
</dbReference>
<dbReference type="NCBIfam" id="TIGR00464">
    <property type="entry name" value="gltX_bact"/>
    <property type="match status" value="1"/>
</dbReference>
<dbReference type="PANTHER" id="PTHR43311">
    <property type="entry name" value="GLUTAMATE--TRNA LIGASE"/>
    <property type="match status" value="1"/>
</dbReference>
<dbReference type="PANTHER" id="PTHR43311:SF2">
    <property type="entry name" value="GLUTAMATE--TRNA LIGASE, MITOCHONDRIAL-RELATED"/>
    <property type="match status" value="1"/>
</dbReference>
<dbReference type="Pfam" id="PF19269">
    <property type="entry name" value="Anticodon_2"/>
    <property type="match status" value="1"/>
</dbReference>
<dbReference type="Pfam" id="PF00749">
    <property type="entry name" value="tRNA-synt_1c"/>
    <property type="match status" value="1"/>
</dbReference>
<dbReference type="PRINTS" id="PR00987">
    <property type="entry name" value="TRNASYNTHGLU"/>
</dbReference>
<dbReference type="SUPFAM" id="SSF48163">
    <property type="entry name" value="An anticodon-binding domain of class I aminoacyl-tRNA synthetases"/>
    <property type="match status" value="1"/>
</dbReference>
<dbReference type="SUPFAM" id="SSF52374">
    <property type="entry name" value="Nucleotidylyl transferase"/>
    <property type="match status" value="1"/>
</dbReference>
<dbReference type="PROSITE" id="PS00178">
    <property type="entry name" value="AA_TRNA_LIGASE_I"/>
    <property type="match status" value="1"/>
</dbReference>
<proteinExistence type="inferred from homology"/>
<protein>
    <recommendedName>
        <fullName evidence="1">Glutamate--tRNA ligase</fullName>
        <ecNumber evidence="1">6.1.1.17</ecNumber>
    </recommendedName>
    <alternativeName>
        <fullName evidence="1">Glutamyl-tRNA synthetase</fullName>
        <shortName evidence="1">GluRS</shortName>
    </alternativeName>
</protein>
<organism>
    <name type="scientific">Aliivibrio fischeri (strain MJ11)</name>
    <name type="common">Vibrio fischeri</name>
    <dbReference type="NCBI Taxonomy" id="388396"/>
    <lineage>
        <taxon>Bacteria</taxon>
        <taxon>Pseudomonadati</taxon>
        <taxon>Pseudomonadota</taxon>
        <taxon>Gammaproteobacteria</taxon>
        <taxon>Vibrionales</taxon>
        <taxon>Vibrionaceae</taxon>
        <taxon>Aliivibrio</taxon>
    </lineage>
</organism>
<accession>B5FGU2</accession>
<feature type="chain" id="PRO_1000090120" description="Glutamate--tRNA ligase">
    <location>
        <begin position="1"/>
        <end position="474"/>
    </location>
</feature>
<feature type="short sequence motif" description="'HIGH' region" evidence="1">
    <location>
        <begin position="9"/>
        <end position="19"/>
    </location>
</feature>
<feature type="short sequence motif" description="'KMSKS' region" evidence="1">
    <location>
        <begin position="240"/>
        <end position="244"/>
    </location>
</feature>
<feature type="binding site" evidence="1">
    <location>
        <position position="243"/>
    </location>
    <ligand>
        <name>ATP</name>
        <dbReference type="ChEBI" id="CHEBI:30616"/>
    </ligand>
</feature>
<sequence length="474" mass="53263">MTVKTRFAPSPTGYLHVGGARTALYSWLFAKNQGGEFVLRIEDTDLERNSQEAVDAIIEGMHWMGMEWDEGPYYQSKRFDRYNEVVDQLLAEDKAYKCYASKELLDEIRAEQEANKEMARYDANHPKIVAANAAAKEGDACVIRFRNPKEGSVVFDDQIRGRIEISNSQLDDLIIRRTDGAPTYNFVVVVDDWDMGITQVIRGEDHINNTPRQINIYEALGAPVPMFAHCAMILGDDGAKLSKRHGAVSVMQYRDEGYLPNALNNYLVRLGWSHGDQEIFSQEEMINLFSLSAVSKSASAFNTDKLLWLNNHYIKSSEPEYVAKYLQWHLDQKEISLDNGPAITEVIKLVGERCNTLIELAEQSRYFYQDFEEFEAGAAKKHLRGVAKGPLELALAKVEALEEWTTENLHNVIEEVCAELEIGMGKIGMPLRVAVTGGGQSPSVDAVMQLVGKERVVARIKMALAFIAEREANA</sequence>
<name>SYE_ALIFM</name>
<comment type="function">
    <text evidence="1">Catalyzes the attachment of glutamate to tRNA(Glu) in a two-step reaction: glutamate is first activated by ATP to form Glu-AMP and then transferred to the acceptor end of tRNA(Glu).</text>
</comment>
<comment type="catalytic activity">
    <reaction evidence="1">
        <text>tRNA(Glu) + L-glutamate + ATP = L-glutamyl-tRNA(Glu) + AMP + diphosphate</text>
        <dbReference type="Rhea" id="RHEA:23540"/>
        <dbReference type="Rhea" id="RHEA-COMP:9663"/>
        <dbReference type="Rhea" id="RHEA-COMP:9680"/>
        <dbReference type="ChEBI" id="CHEBI:29985"/>
        <dbReference type="ChEBI" id="CHEBI:30616"/>
        <dbReference type="ChEBI" id="CHEBI:33019"/>
        <dbReference type="ChEBI" id="CHEBI:78442"/>
        <dbReference type="ChEBI" id="CHEBI:78520"/>
        <dbReference type="ChEBI" id="CHEBI:456215"/>
        <dbReference type="EC" id="6.1.1.17"/>
    </reaction>
</comment>
<comment type="subunit">
    <text evidence="1">Monomer.</text>
</comment>
<comment type="subcellular location">
    <subcellularLocation>
        <location evidence="1">Cytoplasm</location>
    </subcellularLocation>
</comment>
<comment type="similarity">
    <text evidence="1">Belongs to the class-I aminoacyl-tRNA synthetase family. Glutamate--tRNA ligase type 1 subfamily.</text>
</comment>